<accession>Q88VG4</accession>
<accession>F9UQ41</accession>
<comment type="function">
    <text evidence="1">An essential GTPase which binds GTP, GDP and possibly (p)ppGpp with moderate affinity, with high nucleotide exchange rates and a fairly low GTP hydrolysis rate. Plays a role in control of the cell cycle, stress response, ribosome biogenesis and in those bacteria that undergo differentiation, in morphogenesis control.</text>
</comment>
<comment type="cofactor">
    <cofactor evidence="1">
        <name>Mg(2+)</name>
        <dbReference type="ChEBI" id="CHEBI:18420"/>
    </cofactor>
</comment>
<comment type="subunit">
    <text evidence="1">Monomer.</text>
</comment>
<comment type="subcellular location">
    <subcellularLocation>
        <location evidence="1">Cytoplasm</location>
    </subcellularLocation>
</comment>
<comment type="similarity">
    <text evidence="1">Belongs to the TRAFAC class OBG-HflX-like GTPase superfamily. OBG GTPase family.</text>
</comment>
<evidence type="ECO:0000255" key="1">
    <source>
        <dbReference type="HAMAP-Rule" id="MF_01454"/>
    </source>
</evidence>
<evidence type="ECO:0000255" key="2">
    <source>
        <dbReference type="PROSITE-ProRule" id="PRU01229"/>
    </source>
</evidence>
<evidence type="ECO:0000255" key="3">
    <source>
        <dbReference type="PROSITE-ProRule" id="PRU01231"/>
    </source>
</evidence>
<name>OBG_LACPL</name>
<dbReference type="EC" id="3.6.5.-" evidence="1"/>
<dbReference type="EMBL" id="AL935263">
    <property type="protein sequence ID" value="CCC79330.1"/>
    <property type="molecule type" value="Genomic_DNA"/>
</dbReference>
<dbReference type="RefSeq" id="YP_004889844.1">
    <property type="nucleotide sequence ID" value="NC_004567.2"/>
</dbReference>
<dbReference type="SMR" id="Q88VG4"/>
<dbReference type="STRING" id="220668.lp_2094"/>
<dbReference type="EnsemblBacteria" id="CCC79330">
    <property type="protein sequence ID" value="CCC79330"/>
    <property type="gene ID" value="lp_2094"/>
</dbReference>
<dbReference type="KEGG" id="lpl:lp_2094"/>
<dbReference type="PATRIC" id="fig|220668.9.peg.1771"/>
<dbReference type="eggNOG" id="COG0536">
    <property type="taxonomic scope" value="Bacteria"/>
</dbReference>
<dbReference type="HOGENOM" id="CLU_011747_2_1_9"/>
<dbReference type="OrthoDB" id="9807318at2"/>
<dbReference type="PhylomeDB" id="Q88VG4"/>
<dbReference type="Proteomes" id="UP000000432">
    <property type="component" value="Chromosome"/>
</dbReference>
<dbReference type="GO" id="GO:0005737">
    <property type="term" value="C:cytoplasm"/>
    <property type="evidence" value="ECO:0007669"/>
    <property type="project" value="UniProtKB-SubCell"/>
</dbReference>
<dbReference type="GO" id="GO:0005525">
    <property type="term" value="F:GTP binding"/>
    <property type="evidence" value="ECO:0007669"/>
    <property type="project" value="UniProtKB-UniRule"/>
</dbReference>
<dbReference type="GO" id="GO:0003924">
    <property type="term" value="F:GTPase activity"/>
    <property type="evidence" value="ECO:0007669"/>
    <property type="project" value="UniProtKB-UniRule"/>
</dbReference>
<dbReference type="GO" id="GO:0000287">
    <property type="term" value="F:magnesium ion binding"/>
    <property type="evidence" value="ECO:0007669"/>
    <property type="project" value="InterPro"/>
</dbReference>
<dbReference type="GO" id="GO:0042254">
    <property type="term" value="P:ribosome biogenesis"/>
    <property type="evidence" value="ECO:0007669"/>
    <property type="project" value="UniProtKB-UniRule"/>
</dbReference>
<dbReference type="CDD" id="cd01898">
    <property type="entry name" value="Obg"/>
    <property type="match status" value="1"/>
</dbReference>
<dbReference type="FunFam" id="2.70.210.12:FF:000001">
    <property type="entry name" value="GTPase Obg"/>
    <property type="match status" value="1"/>
</dbReference>
<dbReference type="Gene3D" id="3.30.300.350">
    <property type="entry name" value="GTP-binding protein OBG, C-terminal domain"/>
    <property type="match status" value="1"/>
</dbReference>
<dbReference type="Gene3D" id="2.70.210.12">
    <property type="entry name" value="GTP1/OBG domain"/>
    <property type="match status" value="1"/>
</dbReference>
<dbReference type="Gene3D" id="3.40.50.300">
    <property type="entry name" value="P-loop containing nucleotide triphosphate hydrolases"/>
    <property type="match status" value="1"/>
</dbReference>
<dbReference type="HAMAP" id="MF_01454">
    <property type="entry name" value="GTPase_Obg"/>
    <property type="match status" value="1"/>
</dbReference>
<dbReference type="InterPro" id="IPR031167">
    <property type="entry name" value="G_OBG"/>
</dbReference>
<dbReference type="InterPro" id="IPR006073">
    <property type="entry name" value="GTP-bd"/>
</dbReference>
<dbReference type="InterPro" id="IPR014100">
    <property type="entry name" value="GTP-bd_Obg/CgtA"/>
</dbReference>
<dbReference type="InterPro" id="IPR036346">
    <property type="entry name" value="GTP-bd_prot_GTP1/OBG_C_sf"/>
</dbReference>
<dbReference type="InterPro" id="IPR006074">
    <property type="entry name" value="GTP1-OBG_CS"/>
</dbReference>
<dbReference type="InterPro" id="IPR006169">
    <property type="entry name" value="GTP1_OBG_dom"/>
</dbReference>
<dbReference type="InterPro" id="IPR036726">
    <property type="entry name" value="GTP1_OBG_dom_sf"/>
</dbReference>
<dbReference type="InterPro" id="IPR045086">
    <property type="entry name" value="OBG_GTPase"/>
</dbReference>
<dbReference type="InterPro" id="IPR015349">
    <property type="entry name" value="OCT_dom"/>
</dbReference>
<dbReference type="InterPro" id="IPR027417">
    <property type="entry name" value="P-loop_NTPase"/>
</dbReference>
<dbReference type="NCBIfam" id="TIGR02729">
    <property type="entry name" value="Obg_CgtA"/>
    <property type="match status" value="1"/>
</dbReference>
<dbReference type="NCBIfam" id="TIGR03595">
    <property type="entry name" value="Obg_CgtA_exten"/>
    <property type="match status" value="1"/>
</dbReference>
<dbReference type="NCBIfam" id="NF008954">
    <property type="entry name" value="PRK12296.1"/>
    <property type="match status" value="1"/>
</dbReference>
<dbReference type="NCBIfam" id="NF008955">
    <property type="entry name" value="PRK12297.1"/>
    <property type="match status" value="1"/>
</dbReference>
<dbReference type="NCBIfam" id="NF008956">
    <property type="entry name" value="PRK12299.1"/>
    <property type="match status" value="1"/>
</dbReference>
<dbReference type="PANTHER" id="PTHR11702">
    <property type="entry name" value="DEVELOPMENTALLY REGULATED GTP-BINDING PROTEIN-RELATED"/>
    <property type="match status" value="1"/>
</dbReference>
<dbReference type="PANTHER" id="PTHR11702:SF31">
    <property type="entry name" value="MITOCHONDRIAL RIBOSOME-ASSOCIATED GTPASE 2"/>
    <property type="match status" value="1"/>
</dbReference>
<dbReference type="Pfam" id="PF09269">
    <property type="entry name" value="DUF1967"/>
    <property type="match status" value="1"/>
</dbReference>
<dbReference type="Pfam" id="PF01018">
    <property type="entry name" value="GTP1_OBG"/>
    <property type="match status" value="1"/>
</dbReference>
<dbReference type="Pfam" id="PF01926">
    <property type="entry name" value="MMR_HSR1"/>
    <property type="match status" value="1"/>
</dbReference>
<dbReference type="PRINTS" id="PR00326">
    <property type="entry name" value="GTP1OBG"/>
</dbReference>
<dbReference type="SUPFAM" id="SSF102741">
    <property type="entry name" value="Obg GTP-binding protein C-terminal domain"/>
    <property type="match status" value="1"/>
</dbReference>
<dbReference type="SUPFAM" id="SSF82051">
    <property type="entry name" value="Obg GTP-binding protein N-terminal domain"/>
    <property type="match status" value="1"/>
</dbReference>
<dbReference type="SUPFAM" id="SSF52540">
    <property type="entry name" value="P-loop containing nucleoside triphosphate hydrolases"/>
    <property type="match status" value="1"/>
</dbReference>
<dbReference type="PROSITE" id="PS51710">
    <property type="entry name" value="G_OBG"/>
    <property type="match status" value="1"/>
</dbReference>
<dbReference type="PROSITE" id="PS00905">
    <property type="entry name" value="GTP1_OBG"/>
    <property type="match status" value="1"/>
</dbReference>
<dbReference type="PROSITE" id="PS51883">
    <property type="entry name" value="OBG"/>
    <property type="match status" value="1"/>
</dbReference>
<dbReference type="PROSITE" id="PS51881">
    <property type="entry name" value="OCT"/>
    <property type="match status" value="1"/>
</dbReference>
<sequence>MFVDQVKVDVKAGNGGNGMVAFRREKFVPNGGPAGGDGGRGGSVVLQADEGLRTLMDFRYTRKFKAAAGGNGMIKQMTGRSAKDTIIKVPLGTTVTDAETGELIGDIVNKDQRLVVAKGGRGGRGNIHFASAKNPAPEIAENGEPGDELTIRMELKVLADVGLVGFPSVGKSTLLSVVTSAKPKIAAYHFTTLVPNLGMVRLDDGRDFVMADLPGLIEGAANGVGLGIQFLRHIERTRVILHLIDMSGVEENDPFEDYHKINHELTSYDPDLLKRPQIVVATKMDMPDAEANLEDFKAKLATDDTLPNTPAVYPVSSITQQGLKALLAKTADLLDTTPQFPIKGVDDLKHRDYTTEADADFSIDNPEPGLFVLSGDKLERLFKMTNLDHEESLMRFARQLRGMGVDDALRAAGAKNDDTIQILDYSFQFMD</sequence>
<organism>
    <name type="scientific">Lactiplantibacillus plantarum (strain ATCC BAA-793 / NCIMB 8826 / WCFS1)</name>
    <name type="common">Lactobacillus plantarum</name>
    <dbReference type="NCBI Taxonomy" id="220668"/>
    <lineage>
        <taxon>Bacteria</taxon>
        <taxon>Bacillati</taxon>
        <taxon>Bacillota</taxon>
        <taxon>Bacilli</taxon>
        <taxon>Lactobacillales</taxon>
        <taxon>Lactobacillaceae</taxon>
        <taxon>Lactiplantibacillus</taxon>
    </lineage>
</organism>
<reference key="1">
    <citation type="journal article" date="2003" name="Proc. Natl. Acad. Sci. U.S.A.">
        <title>Complete genome sequence of Lactobacillus plantarum WCFS1.</title>
        <authorList>
            <person name="Kleerebezem M."/>
            <person name="Boekhorst J."/>
            <person name="van Kranenburg R."/>
            <person name="Molenaar D."/>
            <person name="Kuipers O.P."/>
            <person name="Leer R."/>
            <person name="Tarchini R."/>
            <person name="Peters S.A."/>
            <person name="Sandbrink H.M."/>
            <person name="Fiers M.W.E.J."/>
            <person name="Stiekema W."/>
            <person name="Klein Lankhorst R.M."/>
            <person name="Bron P.A."/>
            <person name="Hoffer S.M."/>
            <person name="Nierop Groot M.N."/>
            <person name="Kerkhoven R."/>
            <person name="De Vries M."/>
            <person name="Ursing B."/>
            <person name="De Vos W.M."/>
            <person name="Siezen R.J."/>
        </authorList>
    </citation>
    <scope>NUCLEOTIDE SEQUENCE [LARGE SCALE GENOMIC DNA]</scope>
    <source>
        <strain>ATCC BAA-793 / NCIMB 8826 / WCFS1</strain>
    </source>
</reference>
<reference key="2">
    <citation type="journal article" date="2012" name="J. Bacteriol.">
        <title>Complete resequencing and reannotation of the Lactobacillus plantarum WCFS1 genome.</title>
        <authorList>
            <person name="Siezen R.J."/>
            <person name="Francke C."/>
            <person name="Renckens B."/>
            <person name="Boekhorst J."/>
            <person name="Wels M."/>
            <person name="Kleerebezem M."/>
            <person name="van Hijum S.A."/>
        </authorList>
    </citation>
    <scope>NUCLEOTIDE SEQUENCE [LARGE SCALE GENOMIC DNA]</scope>
    <scope>GENOME REANNOTATION</scope>
    <source>
        <strain>ATCC BAA-793 / NCIMB 8826 / WCFS1</strain>
    </source>
</reference>
<gene>
    <name evidence="1" type="primary">obg</name>
    <name type="ordered locus">lp_2094</name>
</gene>
<protein>
    <recommendedName>
        <fullName evidence="1">GTPase Obg</fullName>
        <ecNumber evidence="1">3.6.5.-</ecNumber>
    </recommendedName>
    <alternativeName>
        <fullName evidence="1">GTP-binding protein Obg</fullName>
    </alternativeName>
</protein>
<feature type="chain" id="PRO_0000385999" description="GTPase Obg">
    <location>
        <begin position="1"/>
        <end position="431"/>
    </location>
</feature>
<feature type="domain" description="Obg" evidence="3">
    <location>
        <begin position="1"/>
        <end position="158"/>
    </location>
</feature>
<feature type="domain" description="OBG-type G" evidence="1">
    <location>
        <begin position="159"/>
        <end position="335"/>
    </location>
</feature>
<feature type="domain" description="OCT" evidence="2">
    <location>
        <begin position="353"/>
        <end position="431"/>
    </location>
</feature>
<feature type="binding site" evidence="1">
    <location>
        <begin position="165"/>
        <end position="172"/>
    </location>
    <ligand>
        <name>GTP</name>
        <dbReference type="ChEBI" id="CHEBI:37565"/>
    </ligand>
</feature>
<feature type="binding site" evidence="1">
    <location>
        <position position="172"/>
    </location>
    <ligand>
        <name>Mg(2+)</name>
        <dbReference type="ChEBI" id="CHEBI:18420"/>
    </ligand>
</feature>
<feature type="binding site" evidence="1">
    <location>
        <begin position="190"/>
        <end position="194"/>
    </location>
    <ligand>
        <name>GTP</name>
        <dbReference type="ChEBI" id="CHEBI:37565"/>
    </ligand>
</feature>
<feature type="binding site" evidence="1">
    <location>
        <position position="192"/>
    </location>
    <ligand>
        <name>Mg(2+)</name>
        <dbReference type="ChEBI" id="CHEBI:18420"/>
    </ligand>
</feature>
<feature type="binding site" evidence="1">
    <location>
        <begin position="212"/>
        <end position="215"/>
    </location>
    <ligand>
        <name>GTP</name>
        <dbReference type="ChEBI" id="CHEBI:37565"/>
    </ligand>
</feature>
<feature type="binding site" evidence="1">
    <location>
        <begin position="282"/>
        <end position="285"/>
    </location>
    <ligand>
        <name>GTP</name>
        <dbReference type="ChEBI" id="CHEBI:37565"/>
    </ligand>
</feature>
<feature type="binding site" evidence="1">
    <location>
        <begin position="316"/>
        <end position="318"/>
    </location>
    <ligand>
        <name>GTP</name>
        <dbReference type="ChEBI" id="CHEBI:37565"/>
    </ligand>
</feature>
<proteinExistence type="inferred from homology"/>
<keyword id="KW-0963">Cytoplasm</keyword>
<keyword id="KW-0342">GTP-binding</keyword>
<keyword id="KW-0378">Hydrolase</keyword>
<keyword id="KW-0460">Magnesium</keyword>
<keyword id="KW-0479">Metal-binding</keyword>
<keyword id="KW-0547">Nucleotide-binding</keyword>
<keyword id="KW-1185">Reference proteome</keyword>